<keyword id="KW-0143">Chaperone</keyword>
<keyword id="KW-0574">Periplasm</keyword>
<keyword id="KW-0653">Protein transport</keyword>
<keyword id="KW-0732">Signal</keyword>
<keyword id="KW-0813">Transport</keyword>
<reference key="1">
    <citation type="journal article" date="2008" name="PLoS ONE">
        <title>Genome biology of Actinobacillus pleuropneumoniae JL03, an isolate of serotype 3 prevalent in China.</title>
        <authorList>
            <person name="Xu Z."/>
            <person name="Zhou Y."/>
            <person name="Li L."/>
            <person name="Zhou R."/>
            <person name="Xiao S."/>
            <person name="Wan Y."/>
            <person name="Zhang S."/>
            <person name="Wang K."/>
            <person name="Li W."/>
            <person name="Li L."/>
            <person name="Jin H."/>
            <person name="Kang M."/>
            <person name="Dalai B."/>
            <person name="Li T."/>
            <person name="Liu L."/>
            <person name="Cheng Y."/>
            <person name="Zhang L."/>
            <person name="Xu T."/>
            <person name="Zheng H."/>
            <person name="Pu S."/>
            <person name="Wang B."/>
            <person name="Gu W."/>
            <person name="Zhang X.L."/>
            <person name="Zhu G.-F."/>
            <person name="Wang S."/>
            <person name="Zhao G.-P."/>
            <person name="Chen H."/>
        </authorList>
    </citation>
    <scope>NUCLEOTIDE SEQUENCE [LARGE SCALE GENOMIC DNA]</scope>
    <source>
        <strain>JL03</strain>
    </source>
</reference>
<feature type="signal peptide" evidence="1">
    <location>
        <begin position="1"/>
        <end position="23"/>
    </location>
</feature>
<feature type="chain" id="PRO_1000100712" description="Outer-membrane lipoprotein carrier protein">
    <location>
        <begin position="24"/>
        <end position="213"/>
    </location>
</feature>
<protein>
    <recommendedName>
        <fullName evidence="1">Outer-membrane lipoprotein carrier protein</fullName>
    </recommendedName>
</protein>
<accession>B0BU79</accession>
<dbReference type="EMBL" id="CP000687">
    <property type="protein sequence ID" value="ABY69084.1"/>
    <property type="molecule type" value="Genomic_DNA"/>
</dbReference>
<dbReference type="RefSeq" id="WP_012262832.1">
    <property type="nucleotide sequence ID" value="NC_010278.1"/>
</dbReference>
<dbReference type="SMR" id="B0BU79"/>
<dbReference type="KEGG" id="apj:APJL_0503"/>
<dbReference type="HOGENOM" id="CLU_087560_1_1_6"/>
<dbReference type="Proteomes" id="UP000008547">
    <property type="component" value="Chromosome"/>
</dbReference>
<dbReference type="GO" id="GO:0030288">
    <property type="term" value="C:outer membrane-bounded periplasmic space"/>
    <property type="evidence" value="ECO:0007669"/>
    <property type="project" value="TreeGrafter"/>
</dbReference>
<dbReference type="GO" id="GO:0044874">
    <property type="term" value="P:lipoprotein localization to outer membrane"/>
    <property type="evidence" value="ECO:0007669"/>
    <property type="project" value="UniProtKB-UniRule"/>
</dbReference>
<dbReference type="GO" id="GO:0042953">
    <property type="term" value="P:lipoprotein transport"/>
    <property type="evidence" value="ECO:0007669"/>
    <property type="project" value="InterPro"/>
</dbReference>
<dbReference type="CDD" id="cd16325">
    <property type="entry name" value="LolA"/>
    <property type="match status" value="1"/>
</dbReference>
<dbReference type="Gene3D" id="2.50.20.10">
    <property type="entry name" value="Lipoprotein localisation LolA/LolB/LppX"/>
    <property type="match status" value="1"/>
</dbReference>
<dbReference type="HAMAP" id="MF_00240">
    <property type="entry name" value="LolA"/>
    <property type="match status" value="1"/>
</dbReference>
<dbReference type="InterPro" id="IPR029046">
    <property type="entry name" value="LolA/LolB/LppX"/>
</dbReference>
<dbReference type="InterPro" id="IPR004564">
    <property type="entry name" value="OM_lipoprot_carrier_LolA-like"/>
</dbReference>
<dbReference type="InterPro" id="IPR018323">
    <property type="entry name" value="OM_lipoprot_carrier_LolA_Pbac"/>
</dbReference>
<dbReference type="NCBIfam" id="TIGR00547">
    <property type="entry name" value="lolA"/>
    <property type="match status" value="1"/>
</dbReference>
<dbReference type="PANTHER" id="PTHR35869">
    <property type="entry name" value="OUTER-MEMBRANE LIPOPROTEIN CARRIER PROTEIN"/>
    <property type="match status" value="1"/>
</dbReference>
<dbReference type="PANTHER" id="PTHR35869:SF1">
    <property type="entry name" value="OUTER-MEMBRANE LIPOPROTEIN CARRIER PROTEIN"/>
    <property type="match status" value="1"/>
</dbReference>
<dbReference type="Pfam" id="PF03548">
    <property type="entry name" value="LolA"/>
    <property type="match status" value="1"/>
</dbReference>
<dbReference type="SUPFAM" id="SSF89392">
    <property type="entry name" value="Prokaryotic lipoproteins and lipoprotein localization factors"/>
    <property type="match status" value="1"/>
</dbReference>
<evidence type="ECO:0000255" key="1">
    <source>
        <dbReference type="HAMAP-Rule" id="MF_00240"/>
    </source>
</evidence>
<organism>
    <name type="scientific">Actinobacillus pleuropneumoniae serotype 3 (strain JL03)</name>
    <dbReference type="NCBI Taxonomy" id="434271"/>
    <lineage>
        <taxon>Bacteria</taxon>
        <taxon>Pseudomonadati</taxon>
        <taxon>Pseudomonadota</taxon>
        <taxon>Gammaproteobacteria</taxon>
        <taxon>Pasteurellales</taxon>
        <taxon>Pasteurellaceae</taxon>
        <taxon>Actinobacillus</taxon>
    </lineage>
</organism>
<proteinExistence type="inferred from homology"/>
<comment type="function">
    <text evidence="1">Participates in the translocation of lipoproteins from the inner membrane to the outer membrane. Only forms a complex with a lipoprotein if the residue after the N-terminal Cys is not an aspartate (The Asp acts as a targeting signal to indicate that the lipoprotein should stay in the inner membrane).</text>
</comment>
<comment type="subunit">
    <text evidence="1">Monomer.</text>
</comment>
<comment type="subcellular location">
    <subcellularLocation>
        <location evidence="1">Periplasm</location>
    </subcellularLocation>
</comment>
<comment type="similarity">
    <text evidence="1">Belongs to the LolA family.</text>
</comment>
<gene>
    <name evidence="1" type="primary">lolA</name>
    <name type="ordered locus">APJL_0503</name>
</gene>
<name>LOLA_ACTPJ</name>
<sequence>MKKLLKQSLLGFALVSMTGAAFADAQSVAELQRRLEQVSQYSADFDQTVRSSKGKQIQSGKGKFQVKRPNLFRMDTKSPQENLIVSDGANLWFYDSFVSQVTVNTVQDAVNNTPFVLLTSSDKSHWDQYDVTQNADTFVLKPKSKKSNLKQFDVRIDQSGMLKGFSTIERDGQSNLYVLRNITGGGVSSDLFKFSVPKGAELDDQRGGKKSKK</sequence>